<reference key="1">
    <citation type="journal article" date="2010" name="J. Bacteriol.">
        <title>Complete genome sequence of Beijerinckia indica subsp. indica.</title>
        <authorList>
            <person name="Tamas I."/>
            <person name="Dedysh S.N."/>
            <person name="Liesack W."/>
            <person name="Stott M.B."/>
            <person name="Alam M."/>
            <person name="Murrell J.C."/>
            <person name="Dunfield P.F."/>
        </authorList>
    </citation>
    <scope>NUCLEOTIDE SEQUENCE [LARGE SCALE GENOMIC DNA]</scope>
    <source>
        <strain>ATCC 9039 / DSM 1715 / NCIMB 8712</strain>
    </source>
</reference>
<organism>
    <name type="scientific">Beijerinckia indica subsp. indica (strain ATCC 9039 / DSM 1715 / NCIMB 8712)</name>
    <dbReference type="NCBI Taxonomy" id="395963"/>
    <lineage>
        <taxon>Bacteria</taxon>
        <taxon>Pseudomonadati</taxon>
        <taxon>Pseudomonadota</taxon>
        <taxon>Alphaproteobacteria</taxon>
        <taxon>Hyphomicrobiales</taxon>
        <taxon>Beijerinckiaceae</taxon>
        <taxon>Beijerinckia</taxon>
    </lineage>
</organism>
<keyword id="KW-0143">Chaperone</keyword>
<keyword id="KW-0963">Cytoplasm</keyword>
<keyword id="KW-0533">Nickel</keyword>
<keyword id="KW-1185">Reference proteome</keyword>
<proteinExistence type="inferred from homology"/>
<gene>
    <name evidence="1" type="primary">ureE</name>
    <name type="ordered locus">Bind_3259</name>
</gene>
<accession>B2ID54</accession>
<sequence length="173" mass="19375">MLRASSVLPRGSWHEPAADVVVLDYDARHRRRIRMRGVRGLDFLLDLENALMLRHGDAVKLDDGRLIEIVAAPEHLVEITCPDAAKLAKIAWHLGNRHLPVEFAGTKLRIRYDPVIASMLKNFSARLREIEAPFEPEGGAYAGSGQDHHDHSHGEHTQGEHTHDEAAEPHHHG</sequence>
<dbReference type="EMBL" id="CP001016">
    <property type="protein sequence ID" value="ACB96819.1"/>
    <property type="molecule type" value="Genomic_DNA"/>
</dbReference>
<dbReference type="SMR" id="B2ID54"/>
<dbReference type="STRING" id="395963.Bind_3259"/>
<dbReference type="KEGG" id="bid:Bind_3259"/>
<dbReference type="eggNOG" id="COG2371">
    <property type="taxonomic scope" value="Bacteria"/>
</dbReference>
<dbReference type="HOGENOM" id="CLU_093757_1_0_5"/>
<dbReference type="OrthoDB" id="9802215at2"/>
<dbReference type="Proteomes" id="UP000001695">
    <property type="component" value="Chromosome"/>
</dbReference>
<dbReference type="GO" id="GO:0005737">
    <property type="term" value="C:cytoplasm"/>
    <property type="evidence" value="ECO:0007669"/>
    <property type="project" value="UniProtKB-SubCell"/>
</dbReference>
<dbReference type="GO" id="GO:0016151">
    <property type="term" value="F:nickel cation binding"/>
    <property type="evidence" value="ECO:0007669"/>
    <property type="project" value="UniProtKB-UniRule"/>
</dbReference>
<dbReference type="GO" id="GO:0051082">
    <property type="term" value="F:unfolded protein binding"/>
    <property type="evidence" value="ECO:0007669"/>
    <property type="project" value="UniProtKB-UniRule"/>
</dbReference>
<dbReference type="GO" id="GO:0006457">
    <property type="term" value="P:protein folding"/>
    <property type="evidence" value="ECO:0007669"/>
    <property type="project" value="InterPro"/>
</dbReference>
<dbReference type="GO" id="GO:0065003">
    <property type="term" value="P:protein-containing complex assembly"/>
    <property type="evidence" value="ECO:0007669"/>
    <property type="project" value="InterPro"/>
</dbReference>
<dbReference type="GO" id="GO:0019627">
    <property type="term" value="P:urea metabolic process"/>
    <property type="evidence" value="ECO:0007669"/>
    <property type="project" value="InterPro"/>
</dbReference>
<dbReference type="CDD" id="cd00571">
    <property type="entry name" value="UreE"/>
    <property type="match status" value="1"/>
</dbReference>
<dbReference type="Gene3D" id="2.60.260.20">
    <property type="entry name" value="Urease metallochaperone UreE, N-terminal domain"/>
    <property type="match status" value="1"/>
</dbReference>
<dbReference type="Gene3D" id="3.30.70.790">
    <property type="entry name" value="UreE, C-terminal domain"/>
    <property type="match status" value="1"/>
</dbReference>
<dbReference type="HAMAP" id="MF_00822">
    <property type="entry name" value="UreE"/>
    <property type="match status" value="1"/>
</dbReference>
<dbReference type="InterPro" id="IPR012406">
    <property type="entry name" value="UreE"/>
</dbReference>
<dbReference type="InterPro" id="IPR007864">
    <property type="entry name" value="UreE_C_dom"/>
</dbReference>
<dbReference type="InterPro" id="IPR004029">
    <property type="entry name" value="UreE_N"/>
</dbReference>
<dbReference type="InterPro" id="IPR036118">
    <property type="entry name" value="UreE_N_sf"/>
</dbReference>
<dbReference type="Pfam" id="PF05194">
    <property type="entry name" value="UreE_C"/>
    <property type="match status" value="1"/>
</dbReference>
<dbReference type="Pfam" id="PF02814">
    <property type="entry name" value="UreE_N"/>
    <property type="match status" value="1"/>
</dbReference>
<dbReference type="PIRSF" id="PIRSF036402">
    <property type="entry name" value="Ureas_acces_UreE"/>
    <property type="match status" value="1"/>
</dbReference>
<dbReference type="SMART" id="SM00988">
    <property type="entry name" value="UreE_N"/>
    <property type="match status" value="1"/>
</dbReference>
<dbReference type="SUPFAM" id="SSF69737">
    <property type="entry name" value="Urease metallochaperone UreE, C-terminal domain"/>
    <property type="match status" value="1"/>
</dbReference>
<dbReference type="SUPFAM" id="SSF69287">
    <property type="entry name" value="Urease metallochaperone UreE, N-terminal domain"/>
    <property type="match status" value="1"/>
</dbReference>
<name>UREE_BEII9</name>
<protein>
    <recommendedName>
        <fullName evidence="1">Urease accessory protein UreE</fullName>
    </recommendedName>
</protein>
<feature type="chain" id="PRO_1000197434" description="Urease accessory protein UreE">
    <location>
        <begin position="1"/>
        <end position="173"/>
    </location>
</feature>
<feature type="region of interest" description="Disordered" evidence="2">
    <location>
        <begin position="136"/>
        <end position="173"/>
    </location>
</feature>
<feature type="compositionally biased region" description="Basic and acidic residues" evidence="2">
    <location>
        <begin position="146"/>
        <end position="173"/>
    </location>
</feature>
<comment type="function">
    <text evidence="1">Involved in urease metallocenter assembly. Binds nickel. Probably functions as a nickel donor during metallocenter assembly.</text>
</comment>
<comment type="subcellular location">
    <subcellularLocation>
        <location evidence="1">Cytoplasm</location>
    </subcellularLocation>
</comment>
<comment type="similarity">
    <text evidence="1">Belongs to the UreE family.</text>
</comment>
<evidence type="ECO:0000255" key="1">
    <source>
        <dbReference type="HAMAP-Rule" id="MF_00822"/>
    </source>
</evidence>
<evidence type="ECO:0000256" key="2">
    <source>
        <dbReference type="SAM" id="MobiDB-lite"/>
    </source>
</evidence>